<keyword id="KW-0091">Biomineralization</keyword>
<keyword id="KW-0349">Heme</keyword>
<keyword id="KW-0408">Iron</keyword>
<keyword id="KW-1281">Magnetosome</keyword>
<keyword id="KW-0472">Membrane</keyword>
<keyword id="KW-0479">Metal-binding</keyword>
<keyword id="KW-0560">Oxidoreductase</keyword>
<keyword id="KW-1185">Reference proteome</keyword>
<keyword id="KW-0812">Transmembrane</keyword>
<keyword id="KW-1133">Transmembrane helix</keyword>
<dbReference type="EMBL" id="AF374354">
    <property type="protein sequence ID" value="AAL10001.1"/>
    <property type="molecule type" value="Genomic_DNA"/>
</dbReference>
<dbReference type="EMBL" id="BX571797">
    <property type="protein sequence ID" value="CAE12045.1"/>
    <property type="molecule type" value="Genomic_DNA"/>
</dbReference>
<dbReference type="EMBL" id="AM085146">
    <property type="protein sequence ID" value="CAJ30129.1"/>
    <property type="molecule type" value="Genomic_DNA"/>
</dbReference>
<dbReference type="EMBL" id="CU459003">
    <property type="protein sequence ID" value="CAM78036.1"/>
    <property type="molecule type" value="Genomic_DNA"/>
</dbReference>
<dbReference type="EMBL" id="HG794546">
    <property type="protein sequence ID" value="CDK99581.1"/>
    <property type="molecule type" value="Genomic_DNA"/>
</dbReference>
<dbReference type="STRING" id="1430440.MGMSRv2__2366"/>
<dbReference type="KEGG" id="mgy:MGMSRv2__2366"/>
<dbReference type="eggNOG" id="ENOG50346FK">
    <property type="taxonomic scope" value="Bacteria"/>
</dbReference>
<dbReference type="HOGENOM" id="CLU_1523388_0_0_5"/>
<dbReference type="Proteomes" id="UP000018922">
    <property type="component" value="Chromosome I"/>
</dbReference>
<dbReference type="GO" id="GO:0110146">
    <property type="term" value="C:magnetosome membrane"/>
    <property type="evidence" value="ECO:0000314"/>
    <property type="project" value="UniProtKB"/>
</dbReference>
<dbReference type="GO" id="GO:0046872">
    <property type="term" value="F:metal ion binding"/>
    <property type="evidence" value="ECO:0007669"/>
    <property type="project" value="UniProtKB-KW"/>
</dbReference>
<dbReference type="GO" id="GO:0016491">
    <property type="term" value="F:oxidoreductase activity"/>
    <property type="evidence" value="ECO:0007669"/>
    <property type="project" value="UniProtKB-KW"/>
</dbReference>
<dbReference type="Gene3D" id="2.30.42.60">
    <property type="match status" value="1"/>
</dbReference>
<dbReference type="InterPro" id="IPR040963">
    <property type="entry name" value="MCR"/>
</dbReference>
<dbReference type="InterPro" id="IPR036280">
    <property type="entry name" value="Multihaem_cyt_sf"/>
</dbReference>
<dbReference type="NCBIfam" id="NF040992">
    <property type="entry name" value="MamT"/>
    <property type="match status" value="1"/>
</dbReference>
<dbReference type="Pfam" id="PF18509">
    <property type="entry name" value="MCR"/>
    <property type="match status" value="1"/>
</dbReference>
<dbReference type="SUPFAM" id="SSF48695">
    <property type="entry name" value="Multiheme cytochromes"/>
    <property type="match status" value="1"/>
</dbReference>
<organism>
    <name type="scientific">Magnetospirillum gryphiswaldense (strain DSM 6361 / JCM 21280 / NBRC 15271 / MSR-1)</name>
    <dbReference type="NCBI Taxonomy" id="431944"/>
    <lineage>
        <taxon>Bacteria</taxon>
        <taxon>Pseudomonadati</taxon>
        <taxon>Pseudomonadota</taxon>
        <taxon>Alphaproteobacteria</taxon>
        <taxon>Rhodospirillales</taxon>
        <taxon>Rhodospirillaceae</taxon>
        <taxon>Magnetospirillum</taxon>
    </lineage>
</organism>
<evidence type="ECO:0000255" key="1"/>
<evidence type="ECO:0000269" key="2">
    <source>
    </source>
</evidence>
<evidence type="ECO:0000269" key="3">
    <source>
    </source>
</evidence>
<evidence type="ECO:0000269" key="4">
    <source>
    </source>
</evidence>
<evidence type="ECO:0000303" key="5">
    <source>
    </source>
</evidence>
<evidence type="ECO:0000303" key="6">
    <source>
    </source>
</evidence>
<evidence type="ECO:0000305" key="7"/>
<evidence type="ECO:0000305" key="8">
    <source>
    </source>
</evidence>
<evidence type="ECO:0000305" key="9">
    <source>
    </source>
</evidence>
<evidence type="ECO:0000305" key="10">
    <source>
    </source>
</evidence>
<evidence type="ECO:0000305" key="11">
    <source>
    </source>
</evidence>
<evidence type="ECO:0000305" key="12">
    <source>
    </source>
</evidence>
<name>MAMT_MAGGM</name>
<reference key="1">
    <citation type="journal article" date="2001" name="Appl. Environ. Microbiol.">
        <title>A large gene cluster encoding several magnetosome proteins is conserved in different species of magnetotactic bacteria.</title>
        <authorList>
            <person name="Grunberg K."/>
            <person name="Wawer C."/>
            <person name="Tebo B.M."/>
            <person name="Schuler D."/>
        </authorList>
    </citation>
    <scope>NUCLEOTIDE SEQUENCE [GENOMIC DNA]</scope>
    <source>
        <strain>DSM 6361 / JCM 21280 / NBRC 15271 / MSR-1</strain>
    </source>
</reference>
<reference key="2">
    <citation type="journal article" date="2003" name="J. Bacteriol.">
        <title>Characterization of a spontaneous nonmagnetic mutant of Magnetospirillum gryphiswaldense reveals a large deletion comprising a putative magnetosome island.</title>
        <authorList>
            <person name="Schuebbe S."/>
            <person name="Kube M."/>
            <person name="Scheffel A."/>
            <person name="Wawer C."/>
            <person name="Heyen U."/>
            <person name="Meyerdierks A."/>
            <person name="Madkour M.H."/>
            <person name="Mayer F."/>
            <person name="Reinhardt R."/>
            <person name="Schueler D."/>
        </authorList>
    </citation>
    <scope>NUCLEOTIDE SEQUENCE [GENOMIC DNA]</scope>
    <scope>PROBABLE OPERON</scope>
    <scope>DISRUPTION PHENOTYPE</scope>
    <source>
        <strain>DSM 6361 / JCM 21280 / NBRC 15271 / MSR-1</strain>
    </source>
</reference>
<reference key="3">
    <citation type="journal article" date="2005" name="J. Bacteriol.">
        <title>A hypervariable 130-kilobase genomic region of Magnetospirillum gryphiswaldense comprises a magnetosome island which undergoes frequent rearrangements during stationary growth.</title>
        <authorList>
            <person name="Ullrich S."/>
            <person name="Kube M."/>
            <person name="Schuebbe S."/>
            <person name="Reinhardt R."/>
            <person name="Schueler D."/>
        </authorList>
    </citation>
    <scope>NUCLEOTIDE SEQUENCE [GENOMIC DNA]</scope>
    <source>
        <strain>DSM 6361 / JCM 21280 / NBRC 15271 / MSR-1</strain>
    </source>
</reference>
<reference key="4">
    <citation type="journal article" date="2007" name="J. Bacteriol.">
        <title>Comparative genome analysis of four magnetotactic bacteria reveals a complex set of group-specific genes implicated in magnetosome biomineralization and function.</title>
        <authorList>
            <person name="Richter M."/>
            <person name="Kube M."/>
            <person name="Bazylinski D.A."/>
            <person name="Lombardot T."/>
            <person name="Gloeckner F.O."/>
            <person name="Reinhardt R."/>
            <person name="Schueler D."/>
        </authorList>
    </citation>
    <scope>NUCLEOTIDE SEQUENCE [LARGE SCALE GENOMIC DNA]</scope>
    <source>
        <strain>DSM 6361 / JCM 21280 / NBRC 15271 / MSR-1</strain>
    </source>
</reference>
<reference key="5">
    <citation type="journal article" date="2014" name="Genome Announc.">
        <title>Complete genome sequence of Magnetospirillum gryphiswaldense MSR-1.</title>
        <authorList>
            <person name="Wang X."/>
            <person name="Wang Q."/>
            <person name="Zhang W."/>
            <person name="Wang Y."/>
            <person name="Li L."/>
            <person name="Wen T."/>
            <person name="Zhang T."/>
            <person name="Zhang Y."/>
            <person name="Xu J."/>
            <person name="Hu J."/>
            <person name="Li S."/>
            <person name="Liu L."/>
            <person name="Liu J."/>
            <person name="Jiang W."/>
            <person name="Tian J."/>
            <person name="Li Y."/>
            <person name="Schuler D."/>
            <person name="Wang L."/>
            <person name="Li J."/>
        </authorList>
    </citation>
    <scope>NUCLEOTIDE SEQUENCE [LARGE SCALE GENOMIC DNA]</scope>
    <source>
        <strain>DSM 6361 / JCM 21280 / NBRC 15271 / MSR-1</strain>
    </source>
</reference>
<reference key="6">
    <citation type="journal article" date="2004" name="Appl. Environ. Microbiol.">
        <title>Biochemical and proteomic analysis of the magnetosome membrane in Magnetospirillum gryphiswaldense.</title>
        <authorList>
            <person name="Gruenberg K."/>
            <person name="Mueller E.C."/>
            <person name="Otto A."/>
            <person name="Reszka R."/>
            <person name="Linder D."/>
            <person name="Kube M."/>
            <person name="Reinhardt R."/>
            <person name="Schueler D."/>
        </authorList>
    </citation>
    <scope>SUBCELLULAR LOCATION</scope>
    <source>
        <strain>DSM 6361 / JCM 21280 / NBRC 15271 / MSR-1</strain>
    </source>
</reference>
<reference key="7">
    <citation type="journal article" date="2011" name="PLoS ONE">
        <title>Functional analysis of the magnetosome island in Magnetospirillum gryphiswaldense: the mamAB operon is sufficient for magnetite biomineralization.</title>
        <authorList>
            <person name="Lohsse A."/>
            <person name="Ullrich S."/>
            <person name="Katzmann E."/>
            <person name="Borg S."/>
            <person name="Wanner G."/>
            <person name="Richter M."/>
            <person name="Voigt B."/>
            <person name="Schweder T."/>
            <person name="Schueler D."/>
        </authorList>
    </citation>
    <scope>MINIMAL MAGNETOSOME ISLAND</scope>
    <source>
        <strain>DSM 6361 / JCM 21280 / NBRC 15271 / MSR-1</strain>
    </source>
</reference>
<reference key="8">
    <citation type="journal article" date="2012" name="Biochem. Soc. Trans.">
        <title>Magnetochrome: a c-type cytochrome domain specific to magnetotatic bacteria.</title>
        <authorList>
            <person name="Siponen M.I."/>
            <person name="Adryanczyk G."/>
            <person name="Ginet N."/>
            <person name="Arnoux P."/>
            <person name="Pignol D."/>
        </authorList>
    </citation>
    <scope>POSSIBLE COFACTOR</scope>
    <source>
        <strain>DSM 6361 / JCM 21280 / NBRC 15271 / MSR-1</strain>
    </source>
</reference>
<reference key="9">
    <citation type="journal article" date="2014" name="J. Bacteriol.">
        <title>Genetic dissection of the mamAB and mms6 operons reveals a gene set essential for magnetosome biogenesis in Magnetospirillum gryphiswaldense.</title>
        <authorList>
            <person name="Lohsse A."/>
            <person name="Borg S."/>
            <person name="Raschdorf O."/>
            <person name="Kolinko I."/>
            <person name="Tompa E."/>
            <person name="Posfai M."/>
            <person name="Faivre D."/>
            <person name="Baumgartner J."/>
            <person name="Schueler D."/>
        </authorList>
    </citation>
    <scope>FUNCTION</scope>
    <scope>DISRUPTION PHENOTYPE</scope>
    <source>
        <strain>DSM 6361 / JCM 21280 / NBRC 15271 / MSR-1</strain>
    </source>
</reference>
<feature type="chain" id="PRO_0000447785" description="Magnetosome protein MamT">
    <location>
        <begin position="1"/>
        <end position="174"/>
    </location>
</feature>
<feature type="topological domain" description="Cytoplasmic" evidence="7">
    <location>
        <begin position="1"/>
        <end position="9"/>
    </location>
</feature>
<feature type="transmembrane region" description="Helical" evidence="1">
    <location>
        <begin position="10"/>
        <end position="28"/>
    </location>
</feature>
<feature type="topological domain" description="Lumenal" evidence="7">
    <location>
        <begin position="29"/>
        <end position="174"/>
    </location>
</feature>
<feature type="short sequence motif" description="MCR (magnetochrome) 1" evidence="11">
    <location>
        <begin position="87"/>
        <end position="107"/>
    </location>
</feature>
<feature type="short sequence motif" description="MCR 2" evidence="11">
    <location>
        <begin position="138"/>
        <end position="158"/>
    </location>
</feature>
<feature type="binding site" description="covalent" evidence="11">
    <location>
        <position position="101"/>
    </location>
    <ligand>
        <name>heme</name>
        <dbReference type="ChEBI" id="CHEBI:30413"/>
        <label>1</label>
    </ligand>
</feature>
<feature type="binding site" description="covalent" evidence="11">
    <location>
        <position position="104"/>
    </location>
    <ligand>
        <name>heme</name>
        <dbReference type="ChEBI" id="CHEBI:30413"/>
        <label>1</label>
    </ligand>
</feature>
<feature type="binding site" description="axial binding residue" evidence="11">
    <location>
        <position position="105"/>
    </location>
    <ligand>
        <name>heme</name>
        <dbReference type="ChEBI" id="CHEBI:30413"/>
        <label>1</label>
    </ligand>
    <ligandPart>
        <name>Fe</name>
        <dbReference type="ChEBI" id="CHEBI:18248"/>
    </ligandPart>
</feature>
<feature type="binding site" description="covalent" evidence="11">
    <location>
        <position position="152"/>
    </location>
    <ligand>
        <name>heme</name>
        <dbReference type="ChEBI" id="CHEBI:30413"/>
        <label>2</label>
    </ligand>
</feature>
<feature type="binding site" description="covalent" evidence="11">
    <location>
        <position position="155"/>
    </location>
    <ligand>
        <name>heme</name>
        <dbReference type="ChEBI" id="CHEBI:30413"/>
        <label>2</label>
    </ligand>
</feature>
<feature type="binding site" description="axial binding residue" evidence="11">
    <location>
        <position position="156"/>
    </location>
    <ligand>
        <name>heme</name>
        <dbReference type="ChEBI" id="CHEBI:30413"/>
        <label>2</label>
    </ligand>
    <ligandPart>
        <name>Fe</name>
        <dbReference type="ChEBI" id="CHEBI:18248"/>
    </ligandPart>
</feature>
<feature type="sequence conflict" description="In Ref. 1; AAL10001, 3; CAJ30129 and 4; CAM78036." evidence="7" ref="1 3 4">
    <original>E</original>
    <variation>K</variation>
    <location>
        <position position="30"/>
    </location>
</feature>
<accession>Q93DY4</accession>
<accession>Q6NE48</accession>
<accession>V6F5I9</accession>
<proteinExistence type="inferred from homology"/>
<sequence length="174" mass="18885">MGTPGGGRRWMTLISITLLMVVGLGLYWDELSLSAGISPATSPRRAEGLLLGRLPLPMEPSILSPLEHLIEPPLQYKLMTIRHIPPVMPGTGMPHPYVGDCIQCHLMVGGPAAGSQFKTPYGAVLENLSRVRKLGPPILPTTRQPHPPAGRCIKCHDIVVKVPVEKKSGIKWLL</sequence>
<protein>
    <recommendedName>
        <fullName evidence="7">Magnetosome protein MamT</fullName>
    </recommendedName>
    <alternativeName>
        <fullName evidence="6">Magnetochrome MamT</fullName>
    </alternativeName>
</protein>
<comment type="function">
    <text evidence="11 12">May play a role in magnetite crystal maturation (Probable). May transfer electrons to balance the Fe(2+)-Fe(3+) ratio during magnetite formation (Probable).</text>
</comment>
<comment type="cofactor">
    <cofactor evidence="11">
        <name>heme</name>
        <dbReference type="ChEBI" id="CHEBI:30413"/>
    </cofactor>
    <text evidence="11">Probably binds 2 heme groups via the magnetochrome (MCR) motifs.</text>
</comment>
<comment type="subcellular location">
    <subcellularLocation>
        <location evidence="10">Magnetosome membrane</location>
        <topology evidence="1">Single-pass membrane protein</topology>
    </subcellularLocation>
</comment>
<comment type="induction">
    <text evidence="9">Part of the probable 17 gene mamAB operon.</text>
</comment>
<comment type="disruption phenotype">
    <text evidence="2 4">Normal magnetic response, slightly smaller, irregularly spaced magnetosomes. Near wild-type localization of MamC (PubMed:24816605). Deletion of approximately 80 kb of DNA, including this operon, leads to cells that are non-magnetic, lack internal membrane systems, grow poorly, have reduced mobility and take-up and accumulate iron poorly (PubMed:13129949).</text>
</comment>
<comment type="miscellaneous">
    <text evidence="8">This bacteria makes up to 60 cubo-octahedral magnetosomes of about 45 nm in diameter which contain membrane-bound crystals of magnetite (Fe(3)O(4)).</text>
</comment>
<comment type="miscellaneous">
    <text evidence="3">Expression of just the minimal mamAB gene cluster (MGMSRv2__2365 to MGMSRv2__2381), including this gene, is sufficient to form a minimal magnetosome chain with small magnetite particles.</text>
</comment>
<comment type="similarity">
    <text evidence="7">Belongs to the magnetosome MamT family.</text>
</comment>
<gene>
    <name evidence="5" type="primary">mamT</name>
    <name type="ordered locus">MGMSRv2__2366</name>
    <name type="ORF">mgI501</name>
    <name type="ORF">MGR_4104</name>
</gene>